<dbReference type="EMBL" id="L42023">
    <property type="protein sequence ID" value="AAC23146.1"/>
    <property type="molecule type" value="Genomic_DNA"/>
</dbReference>
<dbReference type="PIR" id="D64032">
    <property type="entry name" value="D64032"/>
</dbReference>
<dbReference type="RefSeq" id="NP_439644.1">
    <property type="nucleotide sequence ID" value="NC_000907.1"/>
</dbReference>
<dbReference type="SMR" id="P44219"/>
<dbReference type="STRING" id="71421.HI_1495"/>
<dbReference type="EnsemblBacteria" id="AAC23146">
    <property type="protein sequence ID" value="AAC23146"/>
    <property type="gene ID" value="HI_1495"/>
</dbReference>
<dbReference type="KEGG" id="hin:HI_1495"/>
<dbReference type="PATRIC" id="fig|71421.8.peg.1563"/>
<dbReference type="eggNOG" id="ENOG5031KA6">
    <property type="taxonomic scope" value="Bacteria"/>
</dbReference>
<dbReference type="HOGENOM" id="CLU_183668_0_0_6"/>
<dbReference type="OrthoDB" id="5682357at2"/>
<dbReference type="BioCyc" id="HINF71421:G1GJ1-1517-MONOMER"/>
<dbReference type="Proteomes" id="UP000000579">
    <property type="component" value="Chromosome"/>
</dbReference>
<dbReference type="GO" id="GO:0005886">
    <property type="term" value="C:plasma membrane"/>
    <property type="evidence" value="ECO:0007669"/>
    <property type="project" value="UniProtKB-SubCell"/>
</dbReference>
<dbReference type="InterPro" id="IPR020300">
    <property type="entry name" value="DUF2644"/>
</dbReference>
<dbReference type="Pfam" id="PF10841">
    <property type="entry name" value="DUF2644"/>
    <property type="match status" value="1"/>
</dbReference>
<protein>
    <recommendedName>
        <fullName>Uncharacterized protein HI_1495</fullName>
    </recommendedName>
</protein>
<accession>P44219</accession>
<organism>
    <name type="scientific">Haemophilus influenzae (strain ATCC 51907 / DSM 11121 / KW20 / Rd)</name>
    <dbReference type="NCBI Taxonomy" id="71421"/>
    <lineage>
        <taxon>Bacteria</taxon>
        <taxon>Pseudomonadati</taxon>
        <taxon>Pseudomonadota</taxon>
        <taxon>Gammaproteobacteria</taxon>
        <taxon>Pasteurellales</taxon>
        <taxon>Pasteurellaceae</taxon>
        <taxon>Haemophilus</taxon>
    </lineage>
</organism>
<proteinExistence type="predicted"/>
<keyword id="KW-1003">Cell membrane</keyword>
<keyword id="KW-0472">Membrane</keyword>
<keyword id="KW-1185">Reference proteome</keyword>
<keyword id="KW-0812">Transmembrane</keyword>
<keyword id="KW-1133">Transmembrane helix</keyword>
<gene>
    <name type="ordered locus">HI_1495</name>
</gene>
<evidence type="ECO:0000255" key="1"/>
<evidence type="ECO:0000256" key="2">
    <source>
        <dbReference type="SAM" id="MobiDB-lite"/>
    </source>
</evidence>
<evidence type="ECO:0000305" key="3"/>
<name>Y1495_HAEIN</name>
<comment type="subcellular location">
    <subcellularLocation>
        <location evidence="3">Cell membrane</location>
        <topology evidence="3">Multi-pass membrane protein</topology>
    </subcellularLocation>
</comment>
<sequence>MGFSELFTNADGRLSTTASIQFWGFVAATGVLLYSVYLDKPYVPEMFSTFLFACVGTAATKGVANALSQRREQGKEQGREQGREQE</sequence>
<feature type="chain" id="PRO_0000078076" description="Uncharacterized protein HI_1495">
    <location>
        <begin position="1"/>
        <end position="86"/>
    </location>
</feature>
<feature type="transmembrane region" description="Helical" evidence="1">
    <location>
        <begin position="20"/>
        <end position="38"/>
    </location>
</feature>
<feature type="transmembrane region" description="Helical" evidence="1">
    <location>
        <begin position="47"/>
        <end position="63"/>
    </location>
</feature>
<feature type="region of interest" description="Disordered" evidence="2">
    <location>
        <begin position="67"/>
        <end position="86"/>
    </location>
</feature>
<feature type="compositionally biased region" description="Basic and acidic residues" evidence="2">
    <location>
        <begin position="69"/>
        <end position="86"/>
    </location>
</feature>
<reference key="1">
    <citation type="journal article" date="1995" name="Science">
        <title>Whole-genome random sequencing and assembly of Haemophilus influenzae Rd.</title>
        <authorList>
            <person name="Fleischmann R.D."/>
            <person name="Adams M.D."/>
            <person name="White O."/>
            <person name="Clayton R.A."/>
            <person name="Kirkness E.F."/>
            <person name="Kerlavage A.R."/>
            <person name="Bult C.J."/>
            <person name="Tomb J.-F."/>
            <person name="Dougherty B.A."/>
            <person name="Merrick J.M."/>
            <person name="McKenney K."/>
            <person name="Sutton G.G."/>
            <person name="FitzHugh W."/>
            <person name="Fields C.A."/>
            <person name="Gocayne J.D."/>
            <person name="Scott J.D."/>
            <person name="Shirley R."/>
            <person name="Liu L.-I."/>
            <person name="Glodek A."/>
            <person name="Kelley J.M."/>
            <person name="Weidman J.F."/>
            <person name="Phillips C.A."/>
            <person name="Spriggs T."/>
            <person name="Hedblom E."/>
            <person name="Cotton M.D."/>
            <person name="Utterback T.R."/>
            <person name="Hanna M.C."/>
            <person name="Nguyen D.T."/>
            <person name="Saudek D.M."/>
            <person name="Brandon R.C."/>
            <person name="Fine L.D."/>
            <person name="Fritchman J.L."/>
            <person name="Fuhrmann J.L."/>
            <person name="Geoghagen N.S.M."/>
            <person name="Gnehm C.L."/>
            <person name="McDonald L.A."/>
            <person name="Small K.V."/>
            <person name="Fraser C.M."/>
            <person name="Smith H.O."/>
            <person name="Venter J.C."/>
        </authorList>
    </citation>
    <scope>NUCLEOTIDE SEQUENCE [LARGE SCALE GENOMIC DNA]</scope>
    <source>
        <strain>ATCC 51907 / DSM 11121 / KW20 / Rd</strain>
    </source>
</reference>